<proteinExistence type="inferred from homology"/>
<name>PKND_CHLTA</name>
<accession>Q3KM61</accession>
<gene>
    <name evidence="1" type="primary">pknD</name>
    <name type="ordered locus">CTA_0323</name>
</gene>
<keyword id="KW-0067">ATP-binding</keyword>
<keyword id="KW-0418">Kinase</keyword>
<keyword id="KW-0547">Nucleotide-binding</keyword>
<keyword id="KW-0597">Phosphoprotein</keyword>
<keyword id="KW-0723">Serine/threonine-protein kinase</keyword>
<keyword id="KW-0808">Transferase</keyword>
<reference key="1">
    <citation type="journal article" date="2005" name="Infect. Immun.">
        <title>Comparative genomic analysis of Chlamydia trachomatis oculotropic and genitotropic strains.</title>
        <authorList>
            <person name="Carlson J.H."/>
            <person name="Porcella S.F."/>
            <person name="McClarty G."/>
            <person name="Caldwell H.D."/>
        </authorList>
    </citation>
    <scope>NUCLEOTIDE SEQUENCE [LARGE SCALE GENOMIC DNA]</scope>
    <source>
        <strain>ATCC VR-571B / DSM 19440 / HAR-13</strain>
    </source>
</reference>
<comment type="function">
    <text evidence="1">Together with the serine/threonine kinase Pkn1, may play a role in the specific interactions with host proteins during intracellular growth.</text>
</comment>
<comment type="catalytic activity">
    <reaction evidence="1">
        <text>L-seryl-[protein] + ATP = O-phospho-L-seryl-[protein] + ADP + H(+)</text>
        <dbReference type="Rhea" id="RHEA:17989"/>
        <dbReference type="Rhea" id="RHEA-COMP:9863"/>
        <dbReference type="Rhea" id="RHEA-COMP:11604"/>
        <dbReference type="ChEBI" id="CHEBI:15378"/>
        <dbReference type="ChEBI" id="CHEBI:29999"/>
        <dbReference type="ChEBI" id="CHEBI:30616"/>
        <dbReference type="ChEBI" id="CHEBI:83421"/>
        <dbReference type="ChEBI" id="CHEBI:456216"/>
        <dbReference type="EC" id="2.7.11.1"/>
    </reaction>
</comment>
<comment type="catalytic activity">
    <reaction evidence="1">
        <text>L-threonyl-[protein] + ATP = O-phospho-L-threonyl-[protein] + ADP + H(+)</text>
        <dbReference type="Rhea" id="RHEA:46608"/>
        <dbReference type="Rhea" id="RHEA-COMP:11060"/>
        <dbReference type="Rhea" id="RHEA-COMP:11605"/>
        <dbReference type="ChEBI" id="CHEBI:15378"/>
        <dbReference type="ChEBI" id="CHEBI:30013"/>
        <dbReference type="ChEBI" id="CHEBI:30616"/>
        <dbReference type="ChEBI" id="CHEBI:61977"/>
        <dbReference type="ChEBI" id="CHEBI:456216"/>
        <dbReference type="EC" id="2.7.11.1"/>
    </reaction>
</comment>
<comment type="PTM">
    <text evidence="1">Autophosphorylated on serine and threonine residues.</text>
</comment>
<comment type="similarity">
    <text evidence="1">Belongs to the protein kinase superfamily. Ser/Thr protein kinase family.</text>
</comment>
<feature type="chain" id="PRO_0000239299" description="Serine/threonine-protein kinase PknD">
    <location>
        <begin position="1"/>
        <end position="934"/>
    </location>
</feature>
<feature type="domain" description="Protein kinase" evidence="1">
    <location>
        <begin position="4"/>
        <end position="296"/>
    </location>
</feature>
<feature type="active site" description="Proton acceptor" evidence="1">
    <location>
        <position position="138"/>
    </location>
</feature>
<feature type="binding site" evidence="1">
    <location>
        <begin position="10"/>
        <end position="18"/>
    </location>
    <ligand>
        <name>ATP</name>
        <dbReference type="ChEBI" id="CHEBI:30616"/>
    </ligand>
</feature>
<feature type="binding site" evidence="1">
    <location>
        <position position="33"/>
    </location>
    <ligand>
        <name>ATP</name>
        <dbReference type="ChEBI" id="CHEBI:30616"/>
    </ligand>
</feature>
<sequence length="934" mass="107668">MQRYELIRLIGKGGMGEVYLAHDKACSRRVALKRIREDLSGNALLRQRFLREAKIAADLIHPGIVPVYSICSDGEAVYYTMPYIEGFSLKSLLKSVWQKEVLSKELEEKTSVKSFLPIFDKICATVEYIHSKGVLHRDLKPDNILLGLFGEVVIIDWGAAIFKHAKELKLEQDDEAAVSFDERNICYSSMTIPGKIVGTPDYMAPESLLGVEASEKTDIYALGLILYQMLTLAFPYRRKKGRKLSYRDVVLPPIEMSPYREIPPSLSQIAMKAIAINPADRFSSIQELRQALQPYLQGDPEWTVKATLMAKEKSCWKYYDPILLSRYFPVLASSPAQWYNFMLSEVEISASTRVEYTVTKSAVHEGMGILFLPSKEAERGEFYCGYGLWFSVQNHELTVSLIKNGIEIQKKSQEMISQQSRFAILIEKSDNRIAVFVEQALFILHIDYLPSLGNRLGVIIQDLQGMSNIAISESIGALRVSCLAVPDAFLSEKLYDQAAIFYRKIRDSFPGRKESYEAQFRLGVTLLTQIEEQGGDLTQALSSFDYLHGGAGAPLEYLGKALVYQRNGSFVEEIRCLLFALKRYSQHPEIPRLEDHLCFRLYDSLHKHRSEALVFMLLILWIAPEKISVREEERFLRIIYHKQQATLFCQVDKAPLQFRSSKMELFLSFWTGFSLFLPELFRRAGGLRDYQALADIFYVAGVSGNREAFMQFSTALANVSDEITFPESLHNQKVAELMFFVKGVEALRNKDYQKAKKLLWKTPFTLQLYALDMFHIQAFLDEEIESFIDLLQAIYDPTSEEERDHILVYIIQTHLWNRDLERAYKLLNDRFPLDEELAEYSEAFILWGCYLALTGDRVAVKAHFSRCRYKYGKSALIGKCVDGDIFDYLDNLVWWEKKMTLFQSYFLLRCLNESPRRYEKYRQAYLSMENNFFD</sequence>
<protein>
    <recommendedName>
        <fullName evidence="1">Serine/threonine-protein kinase PknD</fullName>
        <ecNumber evidence="1">2.7.11.1</ecNumber>
    </recommendedName>
</protein>
<organism>
    <name type="scientific">Chlamydia trachomatis serovar A (strain ATCC VR-571B / DSM 19440 / HAR-13)</name>
    <dbReference type="NCBI Taxonomy" id="315277"/>
    <lineage>
        <taxon>Bacteria</taxon>
        <taxon>Pseudomonadati</taxon>
        <taxon>Chlamydiota</taxon>
        <taxon>Chlamydiia</taxon>
        <taxon>Chlamydiales</taxon>
        <taxon>Chlamydiaceae</taxon>
        <taxon>Chlamydia/Chlamydophila group</taxon>
        <taxon>Chlamydia</taxon>
    </lineage>
</organism>
<dbReference type="EC" id="2.7.11.1" evidence="1"/>
<dbReference type="EMBL" id="CP000051">
    <property type="protein sequence ID" value="AAX50561.1"/>
    <property type="molecule type" value="Genomic_DNA"/>
</dbReference>
<dbReference type="RefSeq" id="WP_011324674.1">
    <property type="nucleotide sequence ID" value="NC_007429.1"/>
</dbReference>
<dbReference type="SMR" id="Q3KM61"/>
<dbReference type="KEGG" id="cta:CTA_0323"/>
<dbReference type="HOGENOM" id="CLU_303227_0_0_0"/>
<dbReference type="Proteomes" id="UP000002532">
    <property type="component" value="Chromosome"/>
</dbReference>
<dbReference type="GO" id="GO:0005524">
    <property type="term" value="F:ATP binding"/>
    <property type="evidence" value="ECO:0007669"/>
    <property type="project" value="UniProtKB-KW"/>
</dbReference>
<dbReference type="GO" id="GO:0106310">
    <property type="term" value="F:protein serine kinase activity"/>
    <property type="evidence" value="ECO:0007669"/>
    <property type="project" value="RHEA"/>
</dbReference>
<dbReference type="GO" id="GO:0004674">
    <property type="term" value="F:protein serine/threonine kinase activity"/>
    <property type="evidence" value="ECO:0007669"/>
    <property type="project" value="UniProtKB-UniRule"/>
</dbReference>
<dbReference type="CDD" id="cd14014">
    <property type="entry name" value="STKc_PknB_like"/>
    <property type="match status" value="1"/>
</dbReference>
<dbReference type="Gene3D" id="3.30.200.20">
    <property type="entry name" value="Phosphorylase Kinase, domain 1"/>
    <property type="match status" value="1"/>
</dbReference>
<dbReference type="Gene3D" id="1.25.40.10">
    <property type="entry name" value="Tetratricopeptide repeat domain"/>
    <property type="match status" value="1"/>
</dbReference>
<dbReference type="Gene3D" id="1.10.510.10">
    <property type="entry name" value="Transferase(Phosphotransferase) domain 1"/>
    <property type="match status" value="1"/>
</dbReference>
<dbReference type="HAMAP" id="MF_01957">
    <property type="entry name" value="PknD_kinase"/>
    <property type="match status" value="1"/>
</dbReference>
<dbReference type="InterPro" id="IPR011009">
    <property type="entry name" value="Kinase-like_dom_sf"/>
</dbReference>
<dbReference type="InterPro" id="IPR000719">
    <property type="entry name" value="Prot_kinase_dom"/>
</dbReference>
<dbReference type="InterPro" id="IPR017441">
    <property type="entry name" value="Protein_kinase_ATP_BS"/>
</dbReference>
<dbReference type="InterPro" id="IPR008271">
    <property type="entry name" value="Ser/Thr_kinase_AS"/>
</dbReference>
<dbReference type="InterPro" id="IPR023507">
    <property type="entry name" value="Ser/Thr_kinase_PknD"/>
</dbReference>
<dbReference type="InterPro" id="IPR011990">
    <property type="entry name" value="TPR-like_helical_dom_sf"/>
</dbReference>
<dbReference type="NCBIfam" id="NF009651">
    <property type="entry name" value="PRK13184.1"/>
    <property type="match status" value="1"/>
</dbReference>
<dbReference type="PANTHER" id="PTHR43289">
    <property type="entry name" value="MITOGEN-ACTIVATED PROTEIN KINASE KINASE KINASE 20-RELATED"/>
    <property type="match status" value="1"/>
</dbReference>
<dbReference type="PANTHER" id="PTHR43289:SF34">
    <property type="entry name" value="SERINE_THREONINE-PROTEIN KINASE YBDM-RELATED"/>
    <property type="match status" value="1"/>
</dbReference>
<dbReference type="Pfam" id="PF00069">
    <property type="entry name" value="Pkinase"/>
    <property type="match status" value="1"/>
</dbReference>
<dbReference type="SMART" id="SM00220">
    <property type="entry name" value="S_TKc"/>
    <property type="match status" value="1"/>
</dbReference>
<dbReference type="SUPFAM" id="SSF56112">
    <property type="entry name" value="Protein kinase-like (PK-like)"/>
    <property type="match status" value="1"/>
</dbReference>
<dbReference type="PROSITE" id="PS00107">
    <property type="entry name" value="PROTEIN_KINASE_ATP"/>
    <property type="match status" value="1"/>
</dbReference>
<dbReference type="PROSITE" id="PS50011">
    <property type="entry name" value="PROTEIN_KINASE_DOM"/>
    <property type="match status" value="1"/>
</dbReference>
<dbReference type="PROSITE" id="PS00108">
    <property type="entry name" value="PROTEIN_KINASE_ST"/>
    <property type="match status" value="1"/>
</dbReference>
<evidence type="ECO:0000255" key="1">
    <source>
        <dbReference type="HAMAP-Rule" id="MF_01957"/>
    </source>
</evidence>